<reference key="1">
    <citation type="journal article" date="2003" name="Proc. Natl. Acad. Sci. U.S.A.">
        <title>Complete genome sequence and analysis of Wolinella succinogenes.</title>
        <authorList>
            <person name="Baar C."/>
            <person name="Eppinger M."/>
            <person name="Raddatz G."/>
            <person name="Simon J."/>
            <person name="Lanz C."/>
            <person name="Klimmek O."/>
            <person name="Nandakumar R."/>
            <person name="Gross R."/>
            <person name="Rosinus A."/>
            <person name="Keller H."/>
            <person name="Jagtap P."/>
            <person name="Linke B."/>
            <person name="Meyer F."/>
            <person name="Lederer H."/>
            <person name="Schuster S.C."/>
        </authorList>
    </citation>
    <scope>NUCLEOTIDE SEQUENCE [LARGE SCALE GENOMIC DNA]</scope>
    <source>
        <strain>ATCC 29543 / DSM 1740 / CCUG 13145 / JCM 31913 / LMG 7466 / NCTC 11488 / FDC 602W</strain>
    </source>
</reference>
<comment type="function">
    <text evidence="1">Catalyzes the acyloin condensation reaction between C atoms 2 and 3 of pyruvate and glyceraldehyde 3-phosphate to yield 1-deoxy-D-xylulose-5-phosphate (DXP).</text>
</comment>
<comment type="catalytic activity">
    <reaction evidence="1">
        <text>D-glyceraldehyde 3-phosphate + pyruvate + H(+) = 1-deoxy-D-xylulose 5-phosphate + CO2</text>
        <dbReference type="Rhea" id="RHEA:12605"/>
        <dbReference type="ChEBI" id="CHEBI:15361"/>
        <dbReference type="ChEBI" id="CHEBI:15378"/>
        <dbReference type="ChEBI" id="CHEBI:16526"/>
        <dbReference type="ChEBI" id="CHEBI:57792"/>
        <dbReference type="ChEBI" id="CHEBI:59776"/>
        <dbReference type="EC" id="2.2.1.7"/>
    </reaction>
</comment>
<comment type="cofactor">
    <cofactor evidence="1">
        <name>Mg(2+)</name>
        <dbReference type="ChEBI" id="CHEBI:18420"/>
    </cofactor>
    <text evidence="1">Binds 1 Mg(2+) ion per subunit.</text>
</comment>
<comment type="cofactor">
    <cofactor evidence="1">
        <name>thiamine diphosphate</name>
        <dbReference type="ChEBI" id="CHEBI:58937"/>
    </cofactor>
    <text evidence="1">Binds 1 thiamine pyrophosphate per subunit.</text>
</comment>
<comment type="pathway">
    <text evidence="1">Metabolic intermediate biosynthesis; 1-deoxy-D-xylulose 5-phosphate biosynthesis; 1-deoxy-D-xylulose 5-phosphate from D-glyceraldehyde 3-phosphate and pyruvate: step 1/1.</text>
</comment>
<comment type="subunit">
    <text evidence="1">Homodimer.</text>
</comment>
<comment type="similarity">
    <text evidence="1">Belongs to the transketolase family. DXPS subfamily.</text>
</comment>
<accession>Q7M7Z0</accession>
<name>DXS_WOLSU</name>
<sequence>MNLKGKTLKELEEVSLSIRERILEVVSHNGGHLSSTLGAVELIVGMHAVFDSSRDPFIFDVSHQAYAHKLLTGRWEEFATLRQFEGVSGFTKPSESEHDYFIAGHSSTSISLAVGAAKAISLSLEKNRMPVVLIGDGSMSAGLCYEALNELGDRKYPMVILLNDNEMSIAEPIGAISKYLSQAIAGRFFQSIKGKVEKLLAHLPEGASYMAKRFEESLKLITPGILFEELGLEYIGPIDGHNLKEIIETLRIAKAMNKPVIIHAQTLKGKGYKIAEGPREHWHGVGPFDLSSGEPLKKPCSSSPTDIFSRTLLELAKEDEKVVGVTAAMPSGTGLSALVHEFPNRFWDVAIAEQHAVTSMAALAKEGYKPFVAIYSTFLQRAYDQIIHDVGIMKLPVKFAIDRGGIVGEDGETHQGILDIGYLRLIPHMTLMAPRSNESLKEAVKFAKDFSLGPIAFRYPRKSFVLQEGIFSESPFLYGKAERLMEGKDEVLFVGFGNGVGRAYEVSKVMASEYEVGLVDLRFVKPLDHETLWELSKEYRYWLVFSDASKVGGVASALLEWKAEVGAEVEILSMELEDEYIQHGKVEQVEEEIGFDVKGLSQKVRERLERIANSQRLLV</sequence>
<organism>
    <name type="scientific">Wolinella succinogenes (strain ATCC 29543 / DSM 1740 / CCUG 13145 / JCM 31913 / LMG 7466 / NCTC 11488 / FDC 602W)</name>
    <name type="common">Vibrio succinogenes</name>
    <dbReference type="NCBI Taxonomy" id="273121"/>
    <lineage>
        <taxon>Bacteria</taxon>
        <taxon>Pseudomonadati</taxon>
        <taxon>Campylobacterota</taxon>
        <taxon>Epsilonproteobacteria</taxon>
        <taxon>Campylobacterales</taxon>
        <taxon>Helicobacteraceae</taxon>
        <taxon>Wolinella</taxon>
    </lineage>
</organism>
<proteinExistence type="inferred from homology"/>
<dbReference type="EC" id="2.2.1.7" evidence="1"/>
<dbReference type="EMBL" id="BX571662">
    <property type="protein sequence ID" value="CAE10998.1"/>
    <property type="molecule type" value="Genomic_DNA"/>
</dbReference>
<dbReference type="RefSeq" id="WP_011139780.1">
    <property type="nucleotide sequence ID" value="NC_005090.1"/>
</dbReference>
<dbReference type="SMR" id="Q7M7Z0"/>
<dbReference type="STRING" id="273121.WS1996"/>
<dbReference type="KEGG" id="wsu:WS1996"/>
<dbReference type="eggNOG" id="COG1154">
    <property type="taxonomic scope" value="Bacteria"/>
</dbReference>
<dbReference type="HOGENOM" id="CLU_009227_1_4_7"/>
<dbReference type="UniPathway" id="UPA00064">
    <property type="reaction ID" value="UER00091"/>
</dbReference>
<dbReference type="Proteomes" id="UP000000422">
    <property type="component" value="Chromosome"/>
</dbReference>
<dbReference type="GO" id="GO:0005829">
    <property type="term" value="C:cytosol"/>
    <property type="evidence" value="ECO:0007669"/>
    <property type="project" value="TreeGrafter"/>
</dbReference>
<dbReference type="GO" id="GO:0008661">
    <property type="term" value="F:1-deoxy-D-xylulose-5-phosphate synthase activity"/>
    <property type="evidence" value="ECO:0007669"/>
    <property type="project" value="UniProtKB-UniRule"/>
</dbReference>
<dbReference type="GO" id="GO:0000287">
    <property type="term" value="F:magnesium ion binding"/>
    <property type="evidence" value="ECO:0007669"/>
    <property type="project" value="UniProtKB-UniRule"/>
</dbReference>
<dbReference type="GO" id="GO:0030976">
    <property type="term" value="F:thiamine pyrophosphate binding"/>
    <property type="evidence" value="ECO:0007669"/>
    <property type="project" value="UniProtKB-UniRule"/>
</dbReference>
<dbReference type="GO" id="GO:0052865">
    <property type="term" value="P:1-deoxy-D-xylulose 5-phosphate biosynthetic process"/>
    <property type="evidence" value="ECO:0007669"/>
    <property type="project" value="UniProtKB-UniPathway"/>
</dbReference>
<dbReference type="GO" id="GO:0019288">
    <property type="term" value="P:isopentenyl diphosphate biosynthetic process, methylerythritol 4-phosphate pathway"/>
    <property type="evidence" value="ECO:0007669"/>
    <property type="project" value="TreeGrafter"/>
</dbReference>
<dbReference type="GO" id="GO:0016114">
    <property type="term" value="P:terpenoid biosynthetic process"/>
    <property type="evidence" value="ECO:0007669"/>
    <property type="project" value="UniProtKB-UniRule"/>
</dbReference>
<dbReference type="GO" id="GO:0009228">
    <property type="term" value="P:thiamine biosynthetic process"/>
    <property type="evidence" value="ECO:0007669"/>
    <property type="project" value="UniProtKB-UniRule"/>
</dbReference>
<dbReference type="CDD" id="cd02007">
    <property type="entry name" value="TPP_DXS"/>
    <property type="match status" value="1"/>
</dbReference>
<dbReference type="CDD" id="cd07033">
    <property type="entry name" value="TPP_PYR_DXS_TK_like"/>
    <property type="match status" value="1"/>
</dbReference>
<dbReference type="FunFam" id="3.40.50.970:FF:000005">
    <property type="entry name" value="1-deoxy-D-xylulose-5-phosphate synthase"/>
    <property type="match status" value="1"/>
</dbReference>
<dbReference type="Gene3D" id="3.40.50.920">
    <property type="match status" value="1"/>
</dbReference>
<dbReference type="Gene3D" id="3.40.50.970">
    <property type="match status" value="2"/>
</dbReference>
<dbReference type="HAMAP" id="MF_00315">
    <property type="entry name" value="DXP_synth"/>
    <property type="match status" value="1"/>
</dbReference>
<dbReference type="InterPro" id="IPR005477">
    <property type="entry name" value="Dxylulose-5-P_synthase"/>
</dbReference>
<dbReference type="InterPro" id="IPR029061">
    <property type="entry name" value="THDP-binding"/>
</dbReference>
<dbReference type="InterPro" id="IPR009014">
    <property type="entry name" value="Transketo_C/PFOR_II"/>
</dbReference>
<dbReference type="InterPro" id="IPR005475">
    <property type="entry name" value="Transketolase-like_Pyr-bd"/>
</dbReference>
<dbReference type="InterPro" id="IPR020826">
    <property type="entry name" value="Transketolase_BS"/>
</dbReference>
<dbReference type="InterPro" id="IPR033248">
    <property type="entry name" value="Transketolase_C"/>
</dbReference>
<dbReference type="InterPro" id="IPR049557">
    <property type="entry name" value="Transketolase_CS"/>
</dbReference>
<dbReference type="NCBIfam" id="TIGR00204">
    <property type="entry name" value="dxs"/>
    <property type="match status" value="1"/>
</dbReference>
<dbReference type="NCBIfam" id="NF003933">
    <property type="entry name" value="PRK05444.2-2"/>
    <property type="match status" value="1"/>
</dbReference>
<dbReference type="PANTHER" id="PTHR43322">
    <property type="entry name" value="1-D-DEOXYXYLULOSE 5-PHOSPHATE SYNTHASE-RELATED"/>
    <property type="match status" value="1"/>
</dbReference>
<dbReference type="PANTHER" id="PTHR43322:SF5">
    <property type="entry name" value="1-DEOXY-D-XYLULOSE-5-PHOSPHATE SYNTHASE, CHLOROPLASTIC"/>
    <property type="match status" value="1"/>
</dbReference>
<dbReference type="Pfam" id="PF13292">
    <property type="entry name" value="DXP_synthase_N"/>
    <property type="match status" value="1"/>
</dbReference>
<dbReference type="Pfam" id="PF02779">
    <property type="entry name" value="Transket_pyr"/>
    <property type="match status" value="1"/>
</dbReference>
<dbReference type="Pfam" id="PF02780">
    <property type="entry name" value="Transketolase_C"/>
    <property type="match status" value="1"/>
</dbReference>
<dbReference type="SMART" id="SM00861">
    <property type="entry name" value="Transket_pyr"/>
    <property type="match status" value="1"/>
</dbReference>
<dbReference type="SUPFAM" id="SSF52518">
    <property type="entry name" value="Thiamin diphosphate-binding fold (THDP-binding)"/>
    <property type="match status" value="2"/>
</dbReference>
<dbReference type="SUPFAM" id="SSF52922">
    <property type="entry name" value="TK C-terminal domain-like"/>
    <property type="match status" value="1"/>
</dbReference>
<dbReference type="PROSITE" id="PS00801">
    <property type="entry name" value="TRANSKETOLASE_1"/>
    <property type="match status" value="1"/>
</dbReference>
<dbReference type="PROSITE" id="PS00802">
    <property type="entry name" value="TRANSKETOLASE_2"/>
    <property type="match status" value="1"/>
</dbReference>
<protein>
    <recommendedName>
        <fullName evidence="1">1-deoxy-D-xylulose-5-phosphate synthase</fullName>
        <ecNumber evidence="1">2.2.1.7</ecNumber>
    </recommendedName>
    <alternativeName>
        <fullName evidence="1">1-deoxyxylulose-5-phosphate synthase</fullName>
        <shortName evidence="1">DXP synthase</shortName>
        <shortName evidence="1">DXPS</shortName>
    </alternativeName>
</protein>
<evidence type="ECO:0000255" key="1">
    <source>
        <dbReference type="HAMAP-Rule" id="MF_00315"/>
    </source>
</evidence>
<gene>
    <name evidence="1" type="primary">dxs</name>
    <name type="ordered locus">WS1996</name>
</gene>
<feature type="chain" id="PRO_0000189174" description="1-deoxy-D-xylulose-5-phosphate synthase">
    <location>
        <begin position="1"/>
        <end position="619"/>
    </location>
</feature>
<feature type="binding site" evidence="1">
    <location>
        <position position="63"/>
    </location>
    <ligand>
        <name>thiamine diphosphate</name>
        <dbReference type="ChEBI" id="CHEBI:58937"/>
    </ligand>
</feature>
<feature type="binding site" evidence="1">
    <location>
        <begin position="104"/>
        <end position="106"/>
    </location>
    <ligand>
        <name>thiamine diphosphate</name>
        <dbReference type="ChEBI" id="CHEBI:58937"/>
    </ligand>
</feature>
<feature type="binding site" evidence="1">
    <location>
        <position position="136"/>
    </location>
    <ligand>
        <name>Mg(2+)</name>
        <dbReference type="ChEBI" id="CHEBI:18420"/>
    </ligand>
</feature>
<feature type="binding site" evidence="1">
    <location>
        <begin position="137"/>
        <end position="138"/>
    </location>
    <ligand>
        <name>thiamine diphosphate</name>
        <dbReference type="ChEBI" id="CHEBI:58937"/>
    </ligand>
</feature>
<feature type="binding site" evidence="1">
    <location>
        <position position="165"/>
    </location>
    <ligand>
        <name>Mg(2+)</name>
        <dbReference type="ChEBI" id="CHEBI:18420"/>
    </ligand>
</feature>
<feature type="binding site" evidence="1">
    <location>
        <position position="165"/>
    </location>
    <ligand>
        <name>thiamine diphosphate</name>
        <dbReference type="ChEBI" id="CHEBI:58937"/>
    </ligand>
</feature>
<feature type="binding site" evidence="1">
    <location>
        <position position="272"/>
    </location>
    <ligand>
        <name>thiamine diphosphate</name>
        <dbReference type="ChEBI" id="CHEBI:58937"/>
    </ligand>
</feature>
<feature type="binding site" evidence="1">
    <location>
        <position position="353"/>
    </location>
    <ligand>
        <name>thiamine diphosphate</name>
        <dbReference type="ChEBI" id="CHEBI:58937"/>
    </ligand>
</feature>
<keyword id="KW-0414">Isoprene biosynthesis</keyword>
<keyword id="KW-0460">Magnesium</keyword>
<keyword id="KW-0479">Metal-binding</keyword>
<keyword id="KW-1185">Reference proteome</keyword>
<keyword id="KW-0784">Thiamine biosynthesis</keyword>
<keyword id="KW-0786">Thiamine pyrophosphate</keyword>
<keyword id="KW-0808">Transferase</keyword>